<protein>
    <recommendedName>
        <fullName>Probable 3-hydroxyacyl-CoA dehydrogenase F54C8.1</fullName>
        <ecNumber>1.1.1.35</ecNumber>
    </recommendedName>
</protein>
<gene>
    <name type="ORF">F54C8.1</name>
</gene>
<sequence length="298" mass="32492">MFTAKCAMQNIRNVAIVGSGQMGSGIAQVTASSGFNVMLADVNKKALDRAMKAISQSVTHLSKKQKGTDKEKSDFVTLTMSRIKTCNNVSTAVADADLIIEAAIENIDLKRGIFAQIEQSCKKDSILTTNTSSFLLEDVAKGLQDKTRFGGLHFFNPVPVMKLLEVIRSDDTSDETYATLIKFGTAVGKTTVACKDSPGFIVNRLLIPYFFEAARMYERGDASMTDIDEAMKLGAGHPMGPFELADYIGLDTVKFVMDGWAAKYPEVQLFEASPLVDKLVAEGKLGRKTGDGFYSYKK</sequence>
<comment type="catalytic activity">
    <reaction>
        <text>a (3S)-3-hydroxyacyl-CoA + NAD(+) = a 3-oxoacyl-CoA + NADH + H(+)</text>
        <dbReference type="Rhea" id="RHEA:22432"/>
        <dbReference type="ChEBI" id="CHEBI:15378"/>
        <dbReference type="ChEBI" id="CHEBI:57318"/>
        <dbReference type="ChEBI" id="CHEBI:57540"/>
        <dbReference type="ChEBI" id="CHEBI:57945"/>
        <dbReference type="ChEBI" id="CHEBI:90726"/>
        <dbReference type="EC" id="1.1.1.35"/>
    </reaction>
</comment>
<comment type="pathway">
    <text>Lipid metabolism; fatty acid beta-oxidation.</text>
</comment>
<comment type="subunit">
    <text evidence="1">Homodimer.</text>
</comment>
<comment type="subcellular location">
    <subcellularLocation>
        <location evidence="1">Mitochondrion matrix</location>
    </subcellularLocation>
</comment>
<comment type="similarity">
    <text evidence="2">Belongs to the 3-hydroxyacyl-CoA dehydrogenase family.</text>
</comment>
<accession>P34439</accession>
<keyword id="KW-0002">3D-structure</keyword>
<keyword id="KW-0276">Fatty acid metabolism</keyword>
<keyword id="KW-0443">Lipid metabolism</keyword>
<keyword id="KW-0496">Mitochondrion</keyword>
<keyword id="KW-0520">NAD</keyword>
<keyword id="KW-0560">Oxidoreductase</keyword>
<keyword id="KW-1185">Reference proteome</keyword>
<organism>
    <name type="scientific">Caenorhabditis elegans</name>
    <dbReference type="NCBI Taxonomy" id="6239"/>
    <lineage>
        <taxon>Eukaryota</taxon>
        <taxon>Metazoa</taxon>
        <taxon>Ecdysozoa</taxon>
        <taxon>Nematoda</taxon>
        <taxon>Chromadorea</taxon>
        <taxon>Rhabditida</taxon>
        <taxon>Rhabditina</taxon>
        <taxon>Rhabditomorpha</taxon>
        <taxon>Rhabditoidea</taxon>
        <taxon>Rhabditidae</taxon>
        <taxon>Peloderinae</taxon>
        <taxon>Caenorhabditis</taxon>
    </lineage>
</organism>
<proteinExistence type="evidence at protein level"/>
<feature type="chain" id="PRO_0000109253" description="Probable 3-hydroxyacyl-CoA dehydrogenase F54C8.1">
    <location>
        <begin position="1"/>
        <end position="298"/>
    </location>
</feature>
<feature type="site" description="Important for catalytic activity" evidence="1">
    <location>
        <position position="153"/>
    </location>
</feature>
<feature type="helix" evidence="3">
    <location>
        <begin position="2"/>
        <end position="5"/>
    </location>
</feature>
<feature type="strand" evidence="3">
    <location>
        <begin position="13"/>
        <end position="17"/>
    </location>
</feature>
<feature type="helix" evidence="3">
    <location>
        <begin position="21"/>
        <end position="32"/>
    </location>
</feature>
<feature type="strand" evidence="3">
    <location>
        <begin position="36"/>
        <end position="40"/>
    </location>
</feature>
<feature type="helix" evidence="3">
    <location>
        <begin position="44"/>
        <end position="64"/>
    </location>
</feature>
<feature type="helix" evidence="3">
    <location>
        <begin position="69"/>
        <end position="80"/>
    </location>
</feature>
<feature type="strand" evidence="3">
    <location>
        <begin position="83"/>
        <end position="87"/>
    </location>
</feature>
<feature type="helix" evidence="3">
    <location>
        <begin position="89"/>
        <end position="93"/>
    </location>
</feature>
<feature type="strand" evidence="3">
    <location>
        <begin position="97"/>
        <end position="101"/>
    </location>
</feature>
<feature type="helix" evidence="3">
    <location>
        <begin position="107"/>
        <end position="120"/>
    </location>
</feature>
<feature type="strand" evidence="3">
    <location>
        <begin position="126"/>
        <end position="129"/>
    </location>
</feature>
<feature type="strand" evidence="3">
    <location>
        <begin position="132"/>
        <end position="134"/>
    </location>
</feature>
<feature type="helix" evidence="3">
    <location>
        <begin position="136"/>
        <end position="139"/>
    </location>
</feature>
<feature type="turn" evidence="4">
    <location>
        <begin position="140"/>
        <end position="142"/>
    </location>
</feature>
<feature type="helix" evidence="3">
    <location>
        <begin position="146"/>
        <end position="148"/>
    </location>
</feature>
<feature type="strand" evidence="3">
    <location>
        <begin position="149"/>
        <end position="153"/>
    </location>
</feature>
<feature type="turn" evidence="3">
    <location>
        <begin position="158"/>
        <end position="160"/>
    </location>
</feature>
<feature type="strand" evidence="3">
    <location>
        <begin position="163"/>
        <end position="168"/>
    </location>
</feature>
<feature type="helix" evidence="3">
    <location>
        <begin position="174"/>
        <end position="186"/>
    </location>
</feature>
<feature type="strand" evidence="3">
    <location>
        <begin position="190"/>
        <end position="196"/>
    </location>
</feature>
<feature type="turn" evidence="3">
    <location>
        <begin position="198"/>
        <end position="201"/>
    </location>
</feature>
<feature type="helix" evidence="3">
    <location>
        <begin position="202"/>
        <end position="219"/>
    </location>
</feature>
<feature type="helix" evidence="3">
    <location>
        <begin position="224"/>
        <end position="235"/>
    </location>
</feature>
<feature type="helix" evidence="3">
    <location>
        <begin position="241"/>
        <end position="248"/>
    </location>
</feature>
<feature type="helix" evidence="3">
    <location>
        <begin position="250"/>
        <end position="263"/>
    </location>
</feature>
<feature type="strand" evidence="4">
    <location>
        <begin position="264"/>
        <end position="266"/>
    </location>
</feature>
<feature type="helix" evidence="3">
    <location>
        <begin position="268"/>
        <end position="270"/>
    </location>
</feature>
<feature type="helix" evidence="3">
    <location>
        <begin position="274"/>
        <end position="281"/>
    </location>
</feature>
<feature type="helix" evidence="3">
    <location>
        <begin position="287"/>
        <end position="289"/>
    </location>
</feature>
<feature type="strand" evidence="3">
    <location>
        <begin position="291"/>
        <end position="295"/>
    </location>
</feature>
<dbReference type="EC" id="1.1.1.35"/>
<dbReference type="EMBL" id="Z22178">
    <property type="protein sequence ID" value="CAA80153.1"/>
    <property type="molecule type" value="Genomic_DNA"/>
</dbReference>
<dbReference type="PIR" id="S40743">
    <property type="entry name" value="S40743"/>
</dbReference>
<dbReference type="RefSeq" id="NP_499075.1">
    <property type="nucleotide sequence ID" value="NM_066674.2"/>
</dbReference>
<dbReference type="PDB" id="4J0E">
    <property type="method" value="X-ray"/>
    <property type="resolution" value="1.60 A"/>
    <property type="chains" value="A/B=1-298"/>
</dbReference>
<dbReference type="PDB" id="4J0F">
    <property type="method" value="X-ray"/>
    <property type="resolution" value="2.20 A"/>
    <property type="chains" value="A/B=1-298"/>
</dbReference>
<dbReference type="PDBsum" id="4J0E"/>
<dbReference type="PDBsum" id="4J0F"/>
<dbReference type="SMR" id="P34439"/>
<dbReference type="BioGRID" id="50969">
    <property type="interactions" value="2"/>
</dbReference>
<dbReference type="FunCoup" id="P34439">
    <property type="interactions" value="979"/>
</dbReference>
<dbReference type="STRING" id="6239.F54C8.1.1"/>
<dbReference type="PaxDb" id="6239-F54C8.1"/>
<dbReference type="PeptideAtlas" id="P34439"/>
<dbReference type="EnsemblMetazoa" id="F54C8.1.1">
    <property type="protein sequence ID" value="F54C8.1.1"/>
    <property type="gene ID" value="WBGene00010035"/>
</dbReference>
<dbReference type="EnsemblMetazoa" id="F54C8.1.2">
    <property type="protein sequence ID" value="F54C8.1.2"/>
    <property type="gene ID" value="WBGene00010035"/>
</dbReference>
<dbReference type="GeneID" id="186222"/>
<dbReference type="KEGG" id="cel:CELE_F54C8.1"/>
<dbReference type="UCSC" id="F54C8.1">
    <property type="organism name" value="c. elegans"/>
</dbReference>
<dbReference type="AGR" id="WB:WBGene00010035"/>
<dbReference type="CTD" id="186222"/>
<dbReference type="WormBase" id="F54C8.1">
    <property type="protein sequence ID" value="CE00187"/>
    <property type="gene ID" value="WBGene00010035"/>
</dbReference>
<dbReference type="eggNOG" id="KOG2304">
    <property type="taxonomic scope" value="Eukaryota"/>
</dbReference>
<dbReference type="GeneTree" id="ENSGT00940000166803"/>
<dbReference type="HOGENOM" id="CLU_009834_2_0_1"/>
<dbReference type="InParanoid" id="P34439"/>
<dbReference type="OMA" id="HFARHGH"/>
<dbReference type="OrthoDB" id="5958943at2759"/>
<dbReference type="PhylomeDB" id="P34439"/>
<dbReference type="BRENDA" id="1.1.1.35">
    <property type="organism ID" value="1045"/>
</dbReference>
<dbReference type="UniPathway" id="UPA00659"/>
<dbReference type="EvolutionaryTrace" id="P34439"/>
<dbReference type="PRO" id="PR:P34439"/>
<dbReference type="Proteomes" id="UP000001940">
    <property type="component" value="Chromosome III"/>
</dbReference>
<dbReference type="Bgee" id="WBGene00010035">
    <property type="expression patterns" value="Expressed in adult organism and 3 other cell types or tissues"/>
</dbReference>
<dbReference type="GO" id="GO:0005759">
    <property type="term" value="C:mitochondrial matrix"/>
    <property type="evidence" value="ECO:0007669"/>
    <property type="project" value="UniProtKB-SubCell"/>
</dbReference>
<dbReference type="GO" id="GO:0005739">
    <property type="term" value="C:mitochondrion"/>
    <property type="evidence" value="ECO:0000318"/>
    <property type="project" value="GO_Central"/>
</dbReference>
<dbReference type="GO" id="GO:0003857">
    <property type="term" value="F:3-hydroxyacyl-CoA dehydrogenase activity"/>
    <property type="evidence" value="ECO:0000318"/>
    <property type="project" value="GO_Central"/>
</dbReference>
<dbReference type="GO" id="GO:0070403">
    <property type="term" value="F:NAD+ binding"/>
    <property type="evidence" value="ECO:0007669"/>
    <property type="project" value="InterPro"/>
</dbReference>
<dbReference type="GO" id="GO:0006635">
    <property type="term" value="P:fatty acid beta-oxidation"/>
    <property type="evidence" value="ECO:0000318"/>
    <property type="project" value="GO_Central"/>
</dbReference>
<dbReference type="FunFam" id="3.40.50.720:FF:000009">
    <property type="entry name" value="Fatty oxidation complex, alpha subunit"/>
    <property type="match status" value="1"/>
</dbReference>
<dbReference type="Gene3D" id="1.10.1040.10">
    <property type="entry name" value="N-(1-d-carboxylethyl)-l-norvaline Dehydrogenase, domain 2"/>
    <property type="match status" value="1"/>
</dbReference>
<dbReference type="Gene3D" id="3.40.50.720">
    <property type="entry name" value="NAD(P)-binding Rossmann-like Domain"/>
    <property type="match status" value="1"/>
</dbReference>
<dbReference type="InterPro" id="IPR022694">
    <property type="entry name" value="3-OHacyl-CoA_DH"/>
</dbReference>
<dbReference type="InterPro" id="IPR006180">
    <property type="entry name" value="3-OHacyl-CoA_DH_CS"/>
</dbReference>
<dbReference type="InterPro" id="IPR006176">
    <property type="entry name" value="3-OHacyl-CoA_DH_NAD-bd"/>
</dbReference>
<dbReference type="InterPro" id="IPR006108">
    <property type="entry name" value="3HC_DH_C"/>
</dbReference>
<dbReference type="InterPro" id="IPR008927">
    <property type="entry name" value="6-PGluconate_DH-like_C_sf"/>
</dbReference>
<dbReference type="InterPro" id="IPR013328">
    <property type="entry name" value="6PGD_dom2"/>
</dbReference>
<dbReference type="InterPro" id="IPR052242">
    <property type="entry name" value="Mito_3-hydroxyacyl-CoA_DH"/>
</dbReference>
<dbReference type="InterPro" id="IPR036291">
    <property type="entry name" value="NAD(P)-bd_dom_sf"/>
</dbReference>
<dbReference type="PANTHER" id="PTHR43561">
    <property type="match status" value="1"/>
</dbReference>
<dbReference type="PANTHER" id="PTHR43561:SF2">
    <property type="entry name" value="3-HYDROXYACYL-COA DEHYDROGENASE F54C8.1-RELATED"/>
    <property type="match status" value="1"/>
</dbReference>
<dbReference type="Pfam" id="PF00725">
    <property type="entry name" value="3HCDH"/>
    <property type="match status" value="1"/>
</dbReference>
<dbReference type="Pfam" id="PF02737">
    <property type="entry name" value="3HCDH_N"/>
    <property type="match status" value="1"/>
</dbReference>
<dbReference type="PIRSF" id="PIRSF000105">
    <property type="entry name" value="HCDH"/>
    <property type="match status" value="1"/>
</dbReference>
<dbReference type="SUPFAM" id="SSF48179">
    <property type="entry name" value="6-phosphogluconate dehydrogenase C-terminal domain-like"/>
    <property type="match status" value="1"/>
</dbReference>
<dbReference type="SUPFAM" id="SSF51735">
    <property type="entry name" value="NAD(P)-binding Rossmann-fold domains"/>
    <property type="match status" value="1"/>
</dbReference>
<dbReference type="PROSITE" id="PS00067">
    <property type="entry name" value="3HCDH"/>
    <property type="match status" value="1"/>
</dbReference>
<evidence type="ECO:0000250" key="1"/>
<evidence type="ECO:0000305" key="2"/>
<evidence type="ECO:0007829" key="3">
    <source>
        <dbReference type="PDB" id="4J0E"/>
    </source>
</evidence>
<evidence type="ECO:0007829" key="4">
    <source>
        <dbReference type="PDB" id="4J0F"/>
    </source>
</evidence>
<reference key="1">
    <citation type="journal article" date="1994" name="Nature">
        <title>2.2 Mb of contiguous nucleotide sequence from chromosome III of C. elegans.</title>
        <authorList>
            <person name="Wilson R."/>
            <person name="Ainscough R."/>
            <person name="Anderson K."/>
            <person name="Baynes C."/>
            <person name="Berks M."/>
            <person name="Bonfield J."/>
            <person name="Burton J."/>
            <person name="Connell M."/>
            <person name="Copsey T."/>
            <person name="Cooper J."/>
            <person name="Coulson A."/>
            <person name="Craxton M."/>
            <person name="Dear S."/>
            <person name="Du Z."/>
            <person name="Durbin R."/>
            <person name="Favello A."/>
            <person name="Fraser A."/>
            <person name="Fulton L."/>
            <person name="Gardner A."/>
            <person name="Green P."/>
            <person name="Hawkins T."/>
            <person name="Hillier L."/>
            <person name="Jier M."/>
            <person name="Johnston L."/>
            <person name="Jones M."/>
            <person name="Kershaw J."/>
            <person name="Kirsten J."/>
            <person name="Laisster N."/>
            <person name="Latreille P."/>
            <person name="Lightning J."/>
            <person name="Lloyd C."/>
            <person name="Mortimore B."/>
            <person name="O'Callaghan M."/>
            <person name="Parsons J."/>
            <person name="Percy C."/>
            <person name="Rifken L."/>
            <person name="Roopra A."/>
            <person name="Saunders D."/>
            <person name="Shownkeen R."/>
            <person name="Sims M."/>
            <person name="Smaldon N."/>
            <person name="Smith A."/>
            <person name="Smith M."/>
            <person name="Sonnhammer E."/>
            <person name="Staden R."/>
            <person name="Sulston J."/>
            <person name="Thierry-Mieg J."/>
            <person name="Thomas K."/>
            <person name="Vaudin M."/>
            <person name="Vaughan K."/>
            <person name="Waterston R."/>
            <person name="Watson A."/>
            <person name="Weinstock L."/>
            <person name="Wilkinson-Sproat J."/>
            <person name="Wohldman P."/>
        </authorList>
    </citation>
    <scope>NUCLEOTIDE SEQUENCE [LARGE SCALE GENOMIC DNA]</scope>
    <source>
        <strain>Bristol N2</strain>
    </source>
</reference>
<reference key="2">
    <citation type="journal article" date="1998" name="Science">
        <title>Genome sequence of the nematode C. elegans: a platform for investigating biology.</title>
        <authorList>
            <consortium name="The C. elegans sequencing consortium"/>
        </authorList>
    </citation>
    <scope>NUCLEOTIDE SEQUENCE [LARGE SCALE GENOMIC DNA]</scope>
    <source>
        <strain>Bristol N2</strain>
    </source>
</reference>
<name>HCDH1_CAEEL</name>